<gene>
    <name evidence="1" type="primary">dnaA</name>
    <name type="ordered locus">BUAP5A_012</name>
</gene>
<proteinExistence type="inferred from homology"/>
<feature type="chain" id="PRO_1000189785" description="Chromosomal replication initiator protein DnaA">
    <location>
        <begin position="1"/>
        <end position="454"/>
    </location>
</feature>
<feature type="region of interest" description="Domain I, interacts with DnaA modulators" evidence="1">
    <location>
        <begin position="1"/>
        <end position="79"/>
    </location>
</feature>
<feature type="region of interest" description="Domain II" evidence="1">
    <location>
        <begin position="79"/>
        <end position="117"/>
    </location>
</feature>
<feature type="region of interest" description="Domain III, AAA+ region" evidence="1">
    <location>
        <begin position="118"/>
        <end position="334"/>
    </location>
</feature>
<feature type="region of interest" description="Domain IV, binds dsDNA" evidence="1">
    <location>
        <begin position="335"/>
        <end position="454"/>
    </location>
</feature>
<feature type="binding site" evidence="1">
    <location>
        <position position="162"/>
    </location>
    <ligand>
        <name>ATP</name>
        <dbReference type="ChEBI" id="CHEBI:30616"/>
    </ligand>
</feature>
<feature type="binding site" evidence="1">
    <location>
        <position position="164"/>
    </location>
    <ligand>
        <name>ATP</name>
        <dbReference type="ChEBI" id="CHEBI:30616"/>
    </ligand>
</feature>
<feature type="binding site" evidence="1">
    <location>
        <position position="165"/>
    </location>
    <ligand>
        <name>ATP</name>
        <dbReference type="ChEBI" id="CHEBI:30616"/>
    </ligand>
</feature>
<feature type="binding site" evidence="1">
    <location>
        <position position="166"/>
    </location>
    <ligand>
        <name>ATP</name>
        <dbReference type="ChEBI" id="CHEBI:30616"/>
    </ligand>
</feature>
<keyword id="KW-0067">ATP-binding</keyword>
<keyword id="KW-0963">Cytoplasm</keyword>
<keyword id="KW-0235">DNA replication</keyword>
<keyword id="KW-0238">DNA-binding</keyword>
<keyword id="KW-0446">Lipid-binding</keyword>
<keyword id="KW-0547">Nucleotide-binding</keyword>
<reference key="1">
    <citation type="journal article" date="2009" name="Science">
        <title>The dynamics and time scale of ongoing genomic erosion in symbiotic bacteria.</title>
        <authorList>
            <person name="Moran N.A."/>
            <person name="McLaughlin H.J."/>
            <person name="Sorek R."/>
        </authorList>
    </citation>
    <scope>NUCLEOTIDE SEQUENCE [LARGE SCALE GENOMIC DNA]</scope>
    <source>
        <strain>5A</strain>
    </source>
</reference>
<dbReference type="EMBL" id="CP001161">
    <property type="protein sequence ID" value="ACL30399.1"/>
    <property type="molecule type" value="Genomic_DNA"/>
</dbReference>
<dbReference type="RefSeq" id="WP_009873974.1">
    <property type="nucleotide sequence ID" value="NC_011833.1"/>
</dbReference>
<dbReference type="SMR" id="B8D8H7"/>
<dbReference type="KEGG" id="bap:BUAP5A_012"/>
<dbReference type="HOGENOM" id="CLU_026910_0_1_6"/>
<dbReference type="OrthoDB" id="9807019at2"/>
<dbReference type="Proteomes" id="UP000006904">
    <property type="component" value="Chromosome"/>
</dbReference>
<dbReference type="GO" id="GO:0005737">
    <property type="term" value="C:cytoplasm"/>
    <property type="evidence" value="ECO:0007669"/>
    <property type="project" value="UniProtKB-SubCell"/>
</dbReference>
<dbReference type="GO" id="GO:0005886">
    <property type="term" value="C:plasma membrane"/>
    <property type="evidence" value="ECO:0007669"/>
    <property type="project" value="TreeGrafter"/>
</dbReference>
<dbReference type="GO" id="GO:0005524">
    <property type="term" value="F:ATP binding"/>
    <property type="evidence" value="ECO:0007669"/>
    <property type="project" value="UniProtKB-UniRule"/>
</dbReference>
<dbReference type="GO" id="GO:0016887">
    <property type="term" value="F:ATP hydrolysis activity"/>
    <property type="evidence" value="ECO:0007669"/>
    <property type="project" value="InterPro"/>
</dbReference>
<dbReference type="GO" id="GO:0003688">
    <property type="term" value="F:DNA replication origin binding"/>
    <property type="evidence" value="ECO:0007669"/>
    <property type="project" value="UniProtKB-UniRule"/>
</dbReference>
<dbReference type="GO" id="GO:0008289">
    <property type="term" value="F:lipid binding"/>
    <property type="evidence" value="ECO:0007669"/>
    <property type="project" value="UniProtKB-KW"/>
</dbReference>
<dbReference type="GO" id="GO:0006270">
    <property type="term" value="P:DNA replication initiation"/>
    <property type="evidence" value="ECO:0007669"/>
    <property type="project" value="UniProtKB-UniRule"/>
</dbReference>
<dbReference type="GO" id="GO:0006275">
    <property type="term" value="P:regulation of DNA replication"/>
    <property type="evidence" value="ECO:0007669"/>
    <property type="project" value="UniProtKB-UniRule"/>
</dbReference>
<dbReference type="CDD" id="cd00009">
    <property type="entry name" value="AAA"/>
    <property type="match status" value="1"/>
</dbReference>
<dbReference type="CDD" id="cd06571">
    <property type="entry name" value="Bac_DnaA_C"/>
    <property type="match status" value="1"/>
</dbReference>
<dbReference type="FunFam" id="1.10.1750.10:FF:000001">
    <property type="entry name" value="Chromosomal replication initiator protein DnaA"/>
    <property type="match status" value="1"/>
</dbReference>
<dbReference type="FunFam" id="1.10.8.60:FF:000003">
    <property type="entry name" value="Chromosomal replication initiator protein DnaA"/>
    <property type="match status" value="1"/>
</dbReference>
<dbReference type="FunFam" id="3.40.50.300:FF:000103">
    <property type="entry name" value="Chromosomal replication initiator protein DnaA"/>
    <property type="match status" value="1"/>
</dbReference>
<dbReference type="Gene3D" id="1.10.1750.10">
    <property type="match status" value="1"/>
</dbReference>
<dbReference type="Gene3D" id="1.10.8.60">
    <property type="match status" value="1"/>
</dbReference>
<dbReference type="Gene3D" id="3.30.300.180">
    <property type="match status" value="1"/>
</dbReference>
<dbReference type="Gene3D" id="3.40.50.300">
    <property type="entry name" value="P-loop containing nucleotide triphosphate hydrolases"/>
    <property type="match status" value="1"/>
</dbReference>
<dbReference type="HAMAP" id="MF_00377">
    <property type="entry name" value="DnaA_bact"/>
    <property type="match status" value="1"/>
</dbReference>
<dbReference type="InterPro" id="IPR003593">
    <property type="entry name" value="AAA+_ATPase"/>
</dbReference>
<dbReference type="InterPro" id="IPR001957">
    <property type="entry name" value="Chromosome_initiator_DnaA"/>
</dbReference>
<dbReference type="InterPro" id="IPR020591">
    <property type="entry name" value="Chromosome_initiator_DnaA-like"/>
</dbReference>
<dbReference type="InterPro" id="IPR018312">
    <property type="entry name" value="Chromosome_initiator_DnaA_CS"/>
</dbReference>
<dbReference type="InterPro" id="IPR013159">
    <property type="entry name" value="DnaA_C"/>
</dbReference>
<dbReference type="InterPro" id="IPR013317">
    <property type="entry name" value="DnaA_dom"/>
</dbReference>
<dbReference type="InterPro" id="IPR024633">
    <property type="entry name" value="DnaA_N_dom"/>
</dbReference>
<dbReference type="InterPro" id="IPR038454">
    <property type="entry name" value="DnaA_N_sf"/>
</dbReference>
<dbReference type="InterPro" id="IPR027417">
    <property type="entry name" value="P-loop_NTPase"/>
</dbReference>
<dbReference type="InterPro" id="IPR010921">
    <property type="entry name" value="Trp_repressor/repl_initiator"/>
</dbReference>
<dbReference type="NCBIfam" id="TIGR00362">
    <property type="entry name" value="DnaA"/>
    <property type="match status" value="1"/>
</dbReference>
<dbReference type="PANTHER" id="PTHR30050">
    <property type="entry name" value="CHROMOSOMAL REPLICATION INITIATOR PROTEIN DNAA"/>
    <property type="match status" value="1"/>
</dbReference>
<dbReference type="PANTHER" id="PTHR30050:SF2">
    <property type="entry name" value="CHROMOSOMAL REPLICATION INITIATOR PROTEIN DNAA"/>
    <property type="match status" value="1"/>
</dbReference>
<dbReference type="Pfam" id="PF00308">
    <property type="entry name" value="Bac_DnaA"/>
    <property type="match status" value="1"/>
</dbReference>
<dbReference type="Pfam" id="PF08299">
    <property type="entry name" value="Bac_DnaA_C"/>
    <property type="match status" value="1"/>
</dbReference>
<dbReference type="Pfam" id="PF11638">
    <property type="entry name" value="DnaA_N"/>
    <property type="match status" value="1"/>
</dbReference>
<dbReference type="PRINTS" id="PR00051">
    <property type="entry name" value="DNAA"/>
</dbReference>
<dbReference type="SMART" id="SM00382">
    <property type="entry name" value="AAA"/>
    <property type="match status" value="1"/>
</dbReference>
<dbReference type="SMART" id="SM00760">
    <property type="entry name" value="Bac_DnaA_C"/>
    <property type="match status" value="1"/>
</dbReference>
<dbReference type="SUPFAM" id="SSF52540">
    <property type="entry name" value="P-loop containing nucleoside triphosphate hydrolases"/>
    <property type="match status" value="1"/>
</dbReference>
<dbReference type="SUPFAM" id="SSF48295">
    <property type="entry name" value="TrpR-like"/>
    <property type="match status" value="1"/>
</dbReference>
<dbReference type="PROSITE" id="PS01008">
    <property type="entry name" value="DNAA"/>
    <property type="match status" value="1"/>
</dbReference>
<evidence type="ECO:0000255" key="1">
    <source>
        <dbReference type="HAMAP-Rule" id="MF_00377"/>
    </source>
</evidence>
<sequence>MSLCLWKQCLDRLQDELPNTEFSMWIRSLKAKLNNNILEIYAPNKFVLEWVKDKYLNHLKKILQDYCGTNSPLIKFEIYQIYKENKLKKNIENNNNNKNEKLIWSNIPKFKNLSYRSNINKRYNFQNFVEGKSNQLARSAAFQAARNPGNSYNPLFLYGATGLGKTHLLHAIGNEILSYKYDIKIIFMNSECFVQDMVKALKNNAIEKFKLYYRSVDALLIDDIQFFAHKERSQEEFFHTFNTLIEGNQQIILTSDRYPKEINGVEDRLKSRFSWGLTIAIDPPEIETRVAILIKKADQNNVILSNEVAFFIAKHLRSNVRELEGALNRVILNSRFTHRAITVDFAREALQDILAVQEKIITIDNIQKTVAKYYKIKVSDLLSKKRSRSIARPRQMAMAMAKKLTNHSLPEIGEAFSGRDHTTVLHACCKIEQLRKENHDIKKDFLNLIRTLSK</sequence>
<protein>
    <recommendedName>
        <fullName evidence="1">Chromosomal replication initiator protein DnaA</fullName>
    </recommendedName>
</protein>
<accession>B8D8H7</accession>
<name>DNAA_BUCA5</name>
<organism>
    <name type="scientific">Buchnera aphidicola subsp. Acyrthosiphon pisum (strain 5A)</name>
    <dbReference type="NCBI Taxonomy" id="563178"/>
    <lineage>
        <taxon>Bacteria</taxon>
        <taxon>Pseudomonadati</taxon>
        <taxon>Pseudomonadota</taxon>
        <taxon>Gammaproteobacteria</taxon>
        <taxon>Enterobacterales</taxon>
        <taxon>Erwiniaceae</taxon>
        <taxon>Buchnera</taxon>
    </lineage>
</organism>
<comment type="function">
    <text evidence="1">Plays an essential role in the initiation and regulation of chromosomal replication. ATP-DnaA binds to the origin of replication (oriC) to initiate formation of the DNA replication initiation complex once per cell cycle. Binds the DnaA box (a 9 base pair repeat at the origin) and separates the double-stranded (ds)DNA. Forms a right-handed helical filament on oriC DNA; dsDNA binds to the exterior of the filament while single-stranded (ss)DNA is stabiized in the filament's interior. The ATP-DnaA-oriC complex binds and stabilizes one strand of the AT-rich DNA unwinding element (DUE), permitting loading of DNA polymerase. After initiation quickly degrades to an ADP-DnaA complex that is not apt for DNA replication. Binds acidic phospholipids.</text>
</comment>
<comment type="subunit">
    <text evidence="1">Oligomerizes as a right-handed, spiral filament on DNA at oriC.</text>
</comment>
<comment type="subcellular location">
    <subcellularLocation>
        <location evidence="1">Cytoplasm</location>
    </subcellularLocation>
</comment>
<comment type="domain">
    <text evidence="1">Domain I is involved in oligomerization and binding regulators, domain II is flexibile and of varying length in different bacteria, domain III forms the AAA+ region, while domain IV binds dsDNA.</text>
</comment>
<comment type="similarity">
    <text evidence="1">Belongs to the DnaA family.</text>
</comment>